<dbReference type="EC" id="2.1.2.9" evidence="1"/>
<dbReference type="EMBL" id="Y13126">
    <property type="protein sequence ID" value="CAA73593.1"/>
    <property type="molecule type" value="Genomic_DNA"/>
</dbReference>
<dbReference type="SMR" id="O33508"/>
<dbReference type="GO" id="GO:0004479">
    <property type="term" value="F:methionyl-tRNA formyltransferase activity"/>
    <property type="evidence" value="ECO:0007669"/>
    <property type="project" value="UniProtKB-EC"/>
</dbReference>
<dbReference type="CDD" id="cd08704">
    <property type="entry name" value="Met_tRNA_FMT_C"/>
    <property type="match status" value="1"/>
</dbReference>
<dbReference type="Gene3D" id="3.10.25.10">
    <property type="entry name" value="Formyl transferase, C-terminal domain"/>
    <property type="match status" value="1"/>
</dbReference>
<dbReference type="InterPro" id="IPR005793">
    <property type="entry name" value="Formyl_trans_C"/>
</dbReference>
<dbReference type="InterPro" id="IPR037022">
    <property type="entry name" value="Formyl_trans_C_sf"/>
</dbReference>
<dbReference type="InterPro" id="IPR011034">
    <property type="entry name" value="Formyl_transferase-like_C_sf"/>
</dbReference>
<dbReference type="InterPro" id="IPR044135">
    <property type="entry name" value="Met-tRNA-FMT_C"/>
</dbReference>
<dbReference type="Pfam" id="PF02911">
    <property type="entry name" value="Formyl_trans_C"/>
    <property type="match status" value="1"/>
</dbReference>
<dbReference type="SUPFAM" id="SSF50486">
    <property type="entry name" value="FMT C-terminal domain-like"/>
    <property type="match status" value="1"/>
</dbReference>
<accession>O33508</accession>
<evidence type="ECO:0000250" key="1">
    <source>
        <dbReference type="UniProtKB" id="P23882"/>
    </source>
</evidence>
<evidence type="ECO:0000305" key="2"/>
<organism>
    <name type="scientific">Rickettsia amblyommatis</name>
    <name type="common">Rickettsia amblyommii</name>
    <dbReference type="NCBI Taxonomy" id="33989"/>
    <lineage>
        <taxon>Bacteria</taxon>
        <taxon>Pseudomonadati</taxon>
        <taxon>Pseudomonadota</taxon>
        <taxon>Alphaproteobacteria</taxon>
        <taxon>Rickettsiales</taxon>
        <taxon>Rickettsiaceae</taxon>
        <taxon>Rickettsieae</taxon>
        <taxon>Rickettsia</taxon>
        <taxon>spotted fever group</taxon>
    </lineage>
</organism>
<reference key="1">
    <citation type="submission" date="1997-05" db="EMBL/GenBank/DDBJ databases">
        <title>Rearrangement of the rRNA genes in Rickettsia preceeded the divergence of the typhus and the spotted fever group Rickettsia.</title>
        <authorList>
            <person name="Andersson S.G.E."/>
            <person name="Stothard D.R."/>
            <person name="Romedenne M."/>
            <person name="Viseur N."/>
            <person name="Fuerst P."/>
            <person name="Kurland C.G."/>
        </authorList>
    </citation>
    <scope>NUCLEOTIDE SEQUENCE [GENOMIC DNA]</scope>
</reference>
<name>FMT_RICAM</name>
<proteinExistence type="inferred from homology"/>
<feature type="chain" id="PRO_0000083026" description="Methionyl-tRNA formyltransferase">
    <location>
        <begin position="1" status="less than"/>
        <end position="73"/>
    </location>
</feature>
<feature type="non-terminal residue">
    <location>
        <position position="1"/>
    </location>
</feature>
<comment type="function">
    <text evidence="1">Attaches a formyl group to the free amino group of methionyl-tRNA(fMet). The formyl group appears to play a dual role in the initiator identity of N-formylmethionyl-tRNA by promoting its recognition by IF2 and preventing the misappropriation of this tRNA by the elongation apparatus.</text>
</comment>
<comment type="catalytic activity">
    <reaction evidence="1">
        <text>L-methionyl-tRNA(fMet) + (6R)-10-formyltetrahydrofolate = N-formyl-L-methionyl-tRNA(fMet) + (6S)-5,6,7,8-tetrahydrofolate + H(+)</text>
        <dbReference type="Rhea" id="RHEA:24380"/>
        <dbReference type="Rhea" id="RHEA-COMP:9952"/>
        <dbReference type="Rhea" id="RHEA-COMP:9953"/>
        <dbReference type="ChEBI" id="CHEBI:15378"/>
        <dbReference type="ChEBI" id="CHEBI:57453"/>
        <dbReference type="ChEBI" id="CHEBI:78530"/>
        <dbReference type="ChEBI" id="CHEBI:78844"/>
        <dbReference type="ChEBI" id="CHEBI:195366"/>
        <dbReference type="EC" id="2.1.2.9"/>
    </reaction>
</comment>
<comment type="similarity">
    <text evidence="2">Belongs to the Fmt family.</text>
</comment>
<gene>
    <name type="primary">fmt</name>
</gene>
<sequence>YFSYNDKIIKILEAEYLNADHHFTAGTVISDKLEIACGSGILRVKKLQQESKKALNIEEFLRGTNILKDTVLK</sequence>
<keyword id="KW-0648">Protein biosynthesis</keyword>
<keyword id="KW-0808">Transferase</keyword>
<protein>
    <recommendedName>
        <fullName evidence="1">Methionyl-tRNA formyltransferase</fullName>
        <ecNumber evidence="1">2.1.2.9</ecNumber>
    </recommendedName>
</protein>